<accession>Q1CTU5</accession>
<reference key="1">
    <citation type="journal article" date="2006" name="Proc. Natl. Acad. Sci. U.S.A.">
        <title>The complete genome sequence of a chronic atrophic gastritis Helicobacter pylori strain: evolution during disease progression.</title>
        <authorList>
            <person name="Oh J.D."/>
            <person name="Kling-Baeckhed H."/>
            <person name="Giannakis M."/>
            <person name="Xu J."/>
            <person name="Fulton R.S."/>
            <person name="Fulton L.A."/>
            <person name="Cordum H.S."/>
            <person name="Wang C."/>
            <person name="Elliott G."/>
            <person name="Edwards J."/>
            <person name="Mardis E.R."/>
            <person name="Engstrand L.G."/>
            <person name="Gordon J.I."/>
        </authorList>
    </citation>
    <scope>NUCLEOTIDE SEQUENCE [LARGE SCALE GENOMIC DNA]</scope>
    <source>
        <strain>HPAG1</strain>
    </source>
</reference>
<gene>
    <name evidence="1" type="primary">pyrC</name>
    <name type="ordered locus">HPAG1_0560</name>
</gene>
<feature type="chain" id="PRO_1000024017" description="Dihydroorotase">
    <location>
        <begin position="1"/>
        <end position="339"/>
    </location>
</feature>
<feature type="active site" evidence="1">
    <location>
        <position position="239"/>
    </location>
</feature>
<feature type="binding site" evidence="1">
    <location>
        <position position="12"/>
    </location>
    <ligand>
        <name>Zn(2+)</name>
        <dbReference type="ChEBI" id="CHEBI:29105"/>
        <label>1</label>
    </ligand>
</feature>
<feature type="binding site" evidence="1">
    <location>
        <begin position="14"/>
        <end position="16"/>
    </location>
    <ligand>
        <name>substrate</name>
    </ligand>
</feature>
<feature type="binding site" evidence="1">
    <location>
        <position position="14"/>
    </location>
    <ligand>
        <name>Zn(2+)</name>
        <dbReference type="ChEBI" id="CHEBI:29105"/>
        <label>1</label>
    </ligand>
</feature>
<feature type="binding site" evidence="1">
    <location>
        <position position="40"/>
    </location>
    <ligand>
        <name>substrate</name>
    </ligand>
</feature>
<feature type="binding site" description="via carbamate group" evidence="1">
    <location>
        <position position="94"/>
    </location>
    <ligand>
        <name>Zn(2+)</name>
        <dbReference type="ChEBI" id="CHEBI:29105"/>
        <label>1</label>
    </ligand>
</feature>
<feature type="binding site" description="via carbamate group" evidence="1">
    <location>
        <position position="94"/>
    </location>
    <ligand>
        <name>Zn(2+)</name>
        <dbReference type="ChEBI" id="CHEBI:29105"/>
        <label>2</label>
    </ligand>
</feature>
<feature type="binding site" evidence="1">
    <location>
        <position position="133"/>
    </location>
    <ligand>
        <name>substrate</name>
    </ligand>
</feature>
<feature type="binding site" evidence="1">
    <location>
        <position position="133"/>
    </location>
    <ligand>
        <name>Zn(2+)</name>
        <dbReference type="ChEBI" id="CHEBI:29105"/>
        <label>2</label>
    </ligand>
</feature>
<feature type="binding site" evidence="1">
    <location>
        <position position="167"/>
    </location>
    <ligand>
        <name>Zn(2+)</name>
        <dbReference type="ChEBI" id="CHEBI:29105"/>
        <label>2</label>
    </ligand>
</feature>
<feature type="binding site" evidence="1">
    <location>
        <position position="239"/>
    </location>
    <ligand>
        <name>Zn(2+)</name>
        <dbReference type="ChEBI" id="CHEBI:29105"/>
        <label>1</label>
    </ligand>
</feature>
<feature type="binding site" evidence="1">
    <location>
        <position position="243"/>
    </location>
    <ligand>
        <name>substrate</name>
    </ligand>
</feature>
<feature type="binding site" evidence="1">
    <location>
        <position position="255"/>
    </location>
    <ligand>
        <name>substrate</name>
    </ligand>
</feature>
<feature type="modified residue" description="N6-carboxylysine" evidence="1">
    <location>
        <position position="94"/>
    </location>
</feature>
<sequence>MEITLFDPIDAHLHVRENALLKAVLRYSSEPFSAAVIMPNLSKPLIDTPTTLEYEEEILKNSSNFKPLMSLYFNDDLTLEELQRAHEKGVRFLKLYPKGMTTNAQNGTSDLLDEKTLEILENAQKLGFILCIHAEQAGFCLDKEFLCHSVLETFALSFPKLKIIIEHLSDWRSIALIEKHDNLYATLTLHHISMTLDDLLGGSLNPHCFCKPLIKTKKDQERLLSLALKAHPKISFGSDSAPHFVSKKHSANIPAGIFSAPILLPALCELFEKHNALENLQAFISNNAKTIYGLDNLPSKKARLSKKPFIVPTHALCLNEKIAILRGGETLSWNLQEIA</sequence>
<evidence type="ECO:0000255" key="1">
    <source>
        <dbReference type="HAMAP-Rule" id="MF_00219"/>
    </source>
</evidence>
<organism>
    <name type="scientific">Helicobacter pylori (strain HPAG1)</name>
    <dbReference type="NCBI Taxonomy" id="357544"/>
    <lineage>
        <taxon>Bacteria</taxon>
        <taxon>Pseudomonadati</taxon>
        <taxon>Campylobacterota</taxon>
        <taxon>Epsilonproteobacteria</taxon>
        <taxon>Campylobacterales</taxon>
        <taxon>Helicobacteraceae</taxon>
        <taxon>Helicobacter</taxon>
    </lineage>
</organism>
<proteinExistence type="inferred from homology"/>
<comment type="function">
    <text evidence="1">Catalyzes the reversible cyclization of carbamoyl aspartate to dihydroorotate.</text>
</comment>
<comment type="catalytic activity">
    <reaction evidence="1">
        <text>(S)-dihydroorotate + H2O = N-carbamoyl-L-aspartate + H(+)</text>
        <dbReference type="Rhea" id="RHEA:24296"/>
        <dbReference type="ChEBI" id="CHEBI:15377"/>
        <dbReference type="ChEBI" id="CHEBI:15378"/>
        <dbReference type="ChEBI" id="CHEBI:30864"/>
        <dbReference type="ChEBI" id="CHEBI:32814"/>
        <dbReference type="EC" id="3.5.2.3"/>
    </reaction>
</comment>
<comment type="cofactor">
    <cofactor evidence="1">
        <name>Zn(2+)</name>
        <dbReference type="ChEBI" id="CHEBI:29105"/>
    </cofactor>
    <text evidence="1">Binds 2 Zn(2+) ions per subunit.</text>
</comment>
<comment type="pathway">
    <text evidence="1">Pyrimidine metabolism; UMP biosynthesis via de novo pathway; (S)-dihydroorotate from bicarbonate: step 3/3.</text>
</comment>
<comment type="subunit">
    <text evidence="1">Homodimer.</text>
</comment>
<comment type="similarity">
    <text evidence="1">Belongs to the metallo-dependent hydrolases superfamily. DHOase family. Class II DHOase subfamily.</text>
</comment>
<keyword id="KW-0378">Hydrolase</keyword>
<keyword id="KW-0479">Metal-binding</keyword>
<keyword id="KW-0665">Pyrimidine biosynthesis</keyword>
<keyword id="KW-0862">Zinc</keyword>
<name>PYRC_HELPH</name>
<protein>
    <recommendedName>
        <fullName evidence="1">Dihydroorotase</fullName>
        <shortName evidence="1">DHOase</shortName>
        <ecNumber evidence="1">3.5.2.3</ecNumber>
    </recommendedName>
</protein>
<dbReference type="EC" id="3.5.2.3" evidence="1"/>
<dbReference type="EMBL" id="CP000241">
    <property type="protein sequence ID" value="ABF84627.1"/>
    <property type="molecule type" value="Genomic_DNA"/>
</dbReference>
<dbReference type="RefSeq" id="WP_000406717.1">
    <property type="nucleotide sequence ID" value="NC_008086.1"/>
</dbReference>
<dbReference type="SMR" id="Q1CTU5"/>
<dbReference type="KEGG" id="hpa:HPAG1_0560"/>
<dbReference type="HOGENOM" id="CLU_041558_0_0_7"/>
<dbReference type="UniPathway" id="UPA00070">
    <property type="reaction ID" value="UER00117"/>
</dbReference>
<dbReference type="GO" id="GO:0005829">
    <property type="term" value="C:cytosol"/>
    <property type="evidence" value="ECO:0007669"/>
    <property type="project" value="TreeGrafter"/>
</dbReference>
<dbReference type="GO" id="GO:0004151">
    <property type="term" value="F:dihydroorotase activity"/>
    <property type="evidence" value="ECO:0007669"/>
    <property type="project" value="UniProtKB-UniRule"/>
</dbReference>
<dbReference type="GO" id="GO:0008270">
    <property type="term" value="F:zinc ion binding"/>
    <property type="evidence" value="ECO:0007669"/>
    <property type="project" value="UniProtKB-UniRule"/>
</dbReference>
<dbReference type="GO" id="GO:0006207">
    <property type="term" value="P:'de novo' pyrimidine nucleobase biosynthetic process"/>
    <property type="evidence" value="ECO:0007669"/>
    <property type="project" value="TreeGrafter"/>
</dbReference>
<dbReference type="GO" id="GO:0044205">
    <property type="term" value="P:'de novo' UMP biosynthetic process"/>
    <property type="evidence" value="ECO:0007669"/>
    <property type="project" value="UniProtKB-UniRule"/>
</dbReference>
<dbReference type="CDD" id="cd01294">
    <property type="entry name" value="DHOase"/>
    <property type="match status" value="1"/>
</dbReference>
<dbReference type="FunFam" id="3.20.20.140:FF:000110">
    <property type="entry name" value="Dihydroorotase"/>
    <property type="match status" value="1"/>
</dbReference>
<dbReference type="Gene3D" id="3.20.20.140">
    <property type="entry name" value="Metal-dependent hydrolases"/>
    <property type="match status" value="1"/>
</dbReference>
<dbReference type="HAMAP" id="MF_00219">
    <property type="entry name" value="PyrC_classII"/>
    <property type="match status" value="1"/>
</dbReference>
<dbReference type="InterPro" id="IPR004721">
    <property type="entry name" value="DHOdimr"/>
</dbReference>
<dbReference type="InterPro" id="IPR002195">
    <property type="entry name" value="Dihydroorotase_CS"/>
</dbReference>
<dbReference type="InterPro" id="IPR032466">
    <property type="entry name" value="Metal_Hydrolase"/>
</dbReference>
<dbReference type="NCBIfam" id="TIGR00856">
    <property type="entry name" value="pyrC_dimer"/>
    <property type="match status" value="1"/>
</dbReference>
<dbReference type="PANTHER" id="PTHR43137">
    <property type="entry name" value="DIHYDROOROTASE"/>
    <property type="match status" value="1"/>
</dbReference>
<dbReference type="PANTHER" id="PTHR43137:SF1">
    <property type="entry name" value="DIHYDROOROTASE"/>
    <property type="match status" value="1"/>
</dbReference>
<dbReference type="PIRSF" id="PIRSF001237">
    <property type="entry name" value="DHOdimr"/>
    <property type="match status" value="1"/>
</dbReference>
<dbReference type="SUPFAM" id="SSF51556">
    <property type="entry name" value="Metallo-dependent hydrolases"/>
    <property type="match status" value="1"/>
</dbReference>
<dbReference type="PROSITE" id="PS00482">
    <property type="entry name" value="DIHYDROOROTASE_1"/>
    <property type="match status" value="1"/>
</dbReference>
<dbReference type="PROSITE" id="PS00483">
    <property type="entry name" value="DIHYDROOROTASE_2"/>
    <property type="match status" value="1"/>
</dbReference>